<sequence>MKTLTVHTPSHSYPIFIGNGLLPQAGSLLKPHLGKRAAIIANETVAPLYLGTLQTALDAAGVSHFSIILPDGEAHKNWQTLNLIFDGLMQNRAERKTTLIALGGGVIGDMVGFAAATYQRGAPFVQIPTTLLSQVDSSVGGKTAINHPLGKNMIGAFYQPQAVLADLDTLHTLPARELSAGMAEVIKYGALGDIGFFEWLEQHMPELMTLDREKLAQAVYRCCQMKADIVAQDETEQGIRAWLNLGHTFGHAIETEMGYGTWLHGEAIAAGCVLAARLSEQLGKTSAADTARLAALLEAAGLPSAPPVFAFEKWLEHMSHDKKVSGGIMRFIGLNRLGEANITEITDTDILRRTLQPYL</sequence>
<comment type="function">
    <text evidence="1">Catalyzes the conversion of 3-deoxy-D-arabino-heptulosonate 7-phosphate (DAHP) to dehydroquinate (DHQ).</text>
</comment>
<comment type="catalytic activity">
    <reaction evidence="1">
        <text>7-phospho-2-dehydro-3-deoxy-D-arabino-heptonate = 3-dehydroquinate + phosphate</text>
        <dbReference type="Rhea" id="RHEA:21968"/>
        <dbReference type="ChEBI" id="CHEBI:32364"/>
        <dbReference type="ChEBI" id="CHEBI:43474"/>
        <dbReference type="ChEBI" id="CHEBI:58394"/>
        <dbReference type="EC" id="4.2.3.4"/>
    </reaction>
</comment>
<comment type="cofactor">
    <cofactor evidence="1">
        <name>NAD(+)</name>
        <dbReference type="ChEBI" id="CHEBI:57540"/>
    </cofactor>
</comment>
<comment type="cofactor">
    <cofactor evidence="1">
        <name>Co(2+)</name>
        <dbReference type="ChEBI" id="CHEBI:48828"/>
    </cofactor>
    <cofactor evidence="1">
        <name>Zn(2+)</name>
        <dbReference type="ChEBI" id="CHEBI:29105"/>
    </cofactor>
    <text evidence="1">Binds 1 divalent metal cation per subunit. Can use either Co(2+) or Zn(2+).</text>
</comment>
<comment type="pathway">
    <text evidence="1">Metabolic intermediate biosynthesis; chorismate biosynthesis; chorismate from D-erythrose 4-phosphate and phosphoenolpyruvate: step 2/7.</text>
</comment>
<comment type="subcellular location">
    <subcellularLocation>
        <location evidence="1">Cytoplasm</location>
    </subcellularLocation>
</comment>
<comment type="similarity">
    <text evidence="1">Belongs to the sugar phosphate cyclases superfamily. Dehydroquinate synthase family.</text>
</comment>
<gene>
    <name evidence="1" type="primary">aroB</name>
    <name type="ordered locus">NMB1814</name>
</gene>
<feature type="chain" id="PRO_0000140760" description="3-dehydroquinate synthase">
    <location>
        <begin position="1"/>
        <end position="359"/>
    </location>
</feature>
<feature type="binding site" evidence="1">
    <location>
        <begin position="71"/>
        <end position="76"/>
    </location>
    <ligand>
        <name>NAD(+)</name>
        <dbReference type="ChEBI" id="CHEBI:57540"/>
    </ligand>
</feature>
<feature type="binding site" evidence="1">
    <location>
        <begin position="105"/>
        <end position="109"/>
    </location>
    <ligand>
        <name>NAD(+)</name>
        <dbReference type="ChEBI" id="CHEBI:57540"/>
    </ligand>
</feature>
<feature type="binding site" evidence="1">
    <location>
        <begin position="129"/>
        <end position="130"/>
    </location>
    <ligand>
        <name>NAD(+)</name>
        <dbReference type="ChEBI" id="CHEBI:57540"/>
    </ligand>
</feature>
<feature type="binding site" evidence="1">
    <location>
        <position position="142"/>
    </location>
    <ligand>
        <name>NAD(+)</name>
        <dbReference type="ChEBI" id="CHEBI:57540"/>
    </ligand>
</feature>
<feature type="binding site" evidence="1">
    <location>
        <position position="151"/>
    </location>
    <ligand>
        <name>NAD(+)</name>
        <dbReference type="ChEBI" id="CHEBI:57540"/>
    </ligand>
</feature>
<feature type="binding site" evidence="1">
    <location>
        <begin position="169"/>
        <end position="172"/>
    </location>
    <ligand>
        <name>NAD(+)</name>
        <dbReference type="ChEBI" id="CHEBI:57540"/>
    </ligand>
</feature>
<feature type="binding site" evidence="1">
    <location>
        <position position="184"/>
    </location>
    <ligand>
        <name>Zn(2+)</name>
        <dbReference type="ChEBI" id="CHEBI:29105"/>
    </ligand>
</feature>
<feature type="binding site" evidence="1">
    <location>
        <position position="247"/>
    </location>
    <ligand>
        <name>Zn(2+)</name>
        <dbReference type="ChEBI" id="CHEBI:29105"/>
    </ligand>
</feature>
<feature type="binding site" evidence="1">
    <location>
        <position position="264"/>
    </location>
    <ligand>
        <name>Zn(2+)</name>
        <dbReference type="ChEBI" id="CHEBI:29105"/>
    </ligand>
</feature>
<dbReference type="EC" id="4.2.3.4" evidence="1"/>
<dbReference type="EMBL" id="AE002098">
    <property type="protein sequence ID" value="AAF42149.1"/>
    <property type="molecule type" value="Genomic_DNA"/>
</dbReference>
<dbReference type="PIR" id="G81038">
    <property type="entry name" value="G81038"/>
</dbReference>
<dbReference type="RefSeq" id="NP_274811.1">
    <property type="nucleotide sequence ID" value="NC_003112.2"/>
</dbReference>
<dbReference type="RefSeq" id="WP_002221481.1">
    <property type="nucleotide sequence ID" value="NC_003112.2"/>
</dbReference>
<dbReference type="SMR" id="Q9JY01"/>
<dbReference type="FunCoup" id="Q9JY01">
    <property type="interactions" value="507"/>
</dbReference>
<dbReference type="STRING" id="122586.NMB1814"/>
<dbReference type="PaxDb" id="122586-NMB1814"/>
<dbReference type="KEGG" id="nme:NMB1814"/>
<dbReference type="PATRIC" id="fig|122586.8.peg.2308"/>
<dbReference type="HOGENOM" id="CLU_001201_0_2_4"/>
<dbReference type="InParanoid" id="Q9JY01"/>
<dbReference type="OrthoDB" id="9806583at2"/>
<dbReference type="UniPathway" id="UPA00053">
    <property type="reaction ID" value="UER00085"/>
</dbReference>
<dbReference type="Proteomes" id="UP000000425">
    <property type="component" value="Chromosome"/>
</dbReference>
<dbReference type="GO" id="GO:0005737">
    <property type="term" value="C:cytoplasm"/>
    <property type="evidence" value="ECO:0007669"/>
    <property type="project" value="UniProtKB-SubCell"/>
</dbReference>
<dbReference type="GO" id="GO:0003856">
    <property type="term" value="F:3-dehydroquinate synthase activity"/>
    <property type="evidence" value="ECO:0000318"/>
    <property type="project" value="GO_Central"/>
</dbReference>
<dbReference type="GO" id="GO:0046872">
    <property type="term" value="F:metal ion binding"/>
    <property type="evidence" value="ECO:0007669"/>
    <property type="project" value="UniProtKB-KW"/>
</dbReference>
<dbReference type="GO" id="GO:0000166">
    <property type="term" value="F:nucleotide binding"/>
    <property type="evidence" value="ECO:0007669"/>
    <property type="project" value="UniProtKB-KW"/>
</dbReference>
<dbReference type="GO" id="GO:0008652">
    <property type="term" value="P:amino acid biosynthetic process"/>
    <property type="evidence" value="ECO:0007669"/>
    <property type="project" value="UniProtKB-KW"/>
</dbReference>
<dbReference type="GO" id="GO:0009073">
    <property type="term" value="P:aromatic amino acid family biosynthetic process"/>
    <property type="evidence" value="ECO:0000318"/>
    <property type="project" value="GO_Central"/>
</dbReference>
<dbReference type="GO" id="GO:0009423">
    <property type="term" value="P:chorismate biosynthetic process"/>
    <property type="evidence" value="ECO:0007669"/>
    <property type="project" value="UniProtKB-UniRule"/>
</dbReference>
<dbReference type="CDD" id="cd08195">
    <property type="entry name" value="DHQS"/>
    <property type="match status" value="1"/>
</dbReference>
<dbReference type="FunFam" id="1.20.1090.10:FF:000002">
    <property type="entry name" value="3-dehydroquinate synthase"/>
    <property type="match status" value="1"/>
</dbReference>
<dbReference type="FunFam" id="3.40.50.1970:FF:000001">
    <property type="entry name" value="3-dehydroquinate synthase"/>
    <property type="match status" value="1"/>
</dbReference>
<dbReference type="Gene3D" id="3.40.50.1970">
    <property type="match status" value="1"/>
</dbReference>
<dbReference type="Gene3D" id="1.20.1090.10">
    <property type="entry name" value="Dehydroquinate synthase-like - alpha domain"/>
    <property type="match status" value="1"/>
</dbReference>
<dbReference type="HAMAP" id="MF_00110">
    <property type="entry name" value="DHQ_synthase"/>
    <property type="match status" value="1"/>
</dbReference>
<dbReference type="InterPro" id="IPR050071">
    <property type="entry name" value="Dehydroquinate_synthase"/>
</dbReference>
<dbReference type="InterPro" id="IPR016037">
    <property type="entry name" value="DHQ_synth_AroB"/>
</dbReference>
<dbReference type="InterPro" id="IPR030963">
    <property type="entry name" value="DHQ_synth_fam"/>
</dbReference>
<dbReference type="InterPro" id="IPR030960">
    <property type="entry name" value="DHQS/DOIS_N"/>
</dbReference>
<dbReference type="InterPro" id="IPR056179">
    <property type="entry name" value="DHQS_C"/>
</dbReference>
<dbReference type="NCBIfam" id="TIGR01357">
    <property type="entry name" value="aroB"/>
    <property type="match status" value="1"/>
</dbReference>
<dbReference type="PANTHER" id="PTHR43622">
    <property type="entry name" value="3-DEHYDROQUINATE SYNTHASE"/>
    <property type="match status" value="1"/>
</dbReference>
<dbReference type="PANTHER" id="PTHR43622:SF7">
    <property type="entry name" value="3-DEHYDROQUINATE SYNTHASE, CHLOROPLASTIC"/>
    <property type="match status" value="1"/>
</dbReference>
<dbReference type="Pfam" id="PF01761">
    <property type="entry name" value="DHQ_synthase"/>
    <property type="match status" value="1"/>
</dbReference>
<dbReference type="Pfam" id="PF24621">
    <property type="entry name" value="DHQS_C"/>
    <property type="match status" value="1"/>
</dbReference>
<dbReference type="PIRSF" id="PIRSF001455">
    <property type="entry name" value="DHQ_synth"/>
    <property type="match status" value="1"/>
</dbReference>
<dbReference type="SUPFAM" id="SSF56796">
    <property type="entry name" value="Dehydroquinate synthase-like"/>
    <property type="match status" value="1"/>
</dbReference>
<keyword id="KW-0028">Amino-acid biosynthesis</keyword>
<keyword id="KW-0057">Aromatic amino acid biosynthesis</keyword>
<keyword id="KW-0170">Cobalt</keyword>
<keyword id="KW-0963">Cytoplasm</keyword>
<keyword id="KW-0456">Lyase</keyword>
<keyword id="KW-0479">Metal-binding</keyword>
<keyword id="KW-0520">NAD</keyword>
<keyword id="KW-0547">Nucleotide-binding</keyword>
<keyword id="KW-1185">Reference proteome</keyword>
<keyword id="KW-0862">Zinc</keyword>
<accession>Q9JY01</accession>
<reference key="1">
    <citation type="journal article" date="2000" name="Science">
        <title>Complete genome sequence of Neisseria meningitidis serogroup B strain MC58.</title>
        <authorList>
            <person name="Tettelin H."/>
            <person name="Saunders N.J."/>
            <person name="Heidelberg J.F."/>
            <person name="Jeffries A.C."/>
            <person name="Nelson K.E."/>
            <person name="Eisen J.A."/>
            <person name="Ketchum K.A."/>
            <person name="Hood D.W."/>
            <person name="Peden J.F."/>
            <person name="Dodson R.J."/>
            <person name="Nelson W.C."/>
            <person name="Gwinn M.L."/>
            <person name="DeBoy R.T."/>
            <person name="Peterson J.D."/>
            <person name="Hickey E.K."/>
            <person name="Haft D.H."/>
            <person name="Salzberg S.L."/>
            <person name="White O."/>
            <person name="Fleischmann R.D."/>
            <person name="Dougherty B.A."/>
            <person name="Mason T.M."/>
            <person name="Ciecko A."/>
            <person name="Parksey D.S."/>
            <person name="Blair E."/>
            <person name="Cittone H."/>
            <person name="Clark E.B."/>
            <person name="Cotton M.D."/>
            <person name="Utterback T.R."/>
            <person name="Khouri H.M."/>
            <person name="Qin H."/>
            <person name="Vamathevan J.J."/>
            <person name="Gill J."/>
            <person name="Scarlato V."/>
            <person name="Masignani V."/>
            <person name="Pizza M."/>
            <person name="Grandi G."/>
            <person name="Sun L."/>
            <person name="Smith H.O."/>
            <person name="Fraser C.M."/>
            <person name="Moxon E.R."/>
            <person name="Rappuoli R."/>
            <person name="Venter J.C."/>
        </authorList>
    </citation>
    <scope>NUCLEOTIDE SEQUENCE [LARGE SCALE GENOMIC DNA]</scope>
    <source>
        <strain>ATCC BAA-335 / MC58</strain>
    </source>
</reference>
<name>AROB_NEIMB</name>
<evidence type="ECO:0000255" key="1">
    <source>
        <dbReference type="HAMAP-Rule" id="MF_00110"/>
    </source>
</evidence>
<organism>
    <name type="scientific">Neisseria meningitidis serogroup B (strain ATCC BAA-335 / MC58)</name>
    <dbReference type="NCBI Taxonomy" id="122586"/>
    <lineage>
        <taxon>Bacteria</taxon>
        <taxon>Pseudomonadati</taxon>
        <taxon>Pseudomonadota</taxon>
        <taxon>Betaproteobacteria</taxon>
        <taxon>Neisseriales</taxon>
        <taxon>Neisseriaceae</taxon>
        <taxon>Neisseria</taxon>
    </lineage>
</organism>
<proteinExistence type="inferred from homology"/>
<protein>
    <recommendedName>
        <fullName evidence="1">3-dehydroquinate synthase</fullName>
        <shortName evidence="1">DHQS</shortName>
        <ecNumber evidence="1">4.2.3.4</ecNumber>
    </recommendedName>
</protein>